<reference key="1">
    <citation type="journal article" date="2009" name="Genome Res.">
        <title>Newly introduced genomic prophage islands are critical determinants of in vivo competitiveness in the Liverpool epidemic strain of Pseudomonas aeruginosa.</title>
        <authorList>
            <person name="Winstanley C."/>
            <person name="Langille M.G.I."/>
            <person name="Fothergill J.L."/>
            <person name="Kukavica-Ibrulj I."/>
            <person name="Paradis-Bleau C."/>
            <person name="Sanschagrin F."/>
            <person name="Thomson N.R."/>
            <person name="Winsor G.L."/>
            <person name="Quail M.A."/>
            <person name="Lennard N."/>
            <person name="Bignell A."/>
            <person name="Clarke L."/>
            <person name="Seeger K."/>
            <person name="Saunders D."/>
            <person name="Harris D."/>
            <person name="Parkhill J."/>
            <person name="Hancock R.E.W."/>
            <person name="Brinkman F.S.L."/>
            <person name="Levesque R.C."/>
        </authorList>
    </citation>
    <scope>NUCLEOTIDE SEQUENCE [LARGE SCALE GENOMIC DNA]</scope>
    <source>
        <strain>LESB58</strain>
    </source>
</reference>
<protein>
    <recommendedName>
        <fullName evidence="1">Sec-independent protein translocase protein TatA</fullName>
    </recommendedName>
</protein>
<comment type="function">
    <text evidence="1">Part of the twin-arginine translocation (Tat) system that transports large folded proteins containing a characteristic twin-arginine motif in their signal peptide across membranes. TatA could form the protein-conducting channel of the Tat system.</text>
</comment>
<comment type="subunit">
    <text evidence="1">The Tat system comprises two distinct complexes: a TatABC complex, containing multiple copies of TatA, TatB and TatC subunits, and a separate TatA complex, containing only TatA subunits. Substrates initially bind to the TatABC complex, which probably triggers association of the separate TatA complex to form the active translocon.</text>
</comment>
<comment type="subcellular location">
    <subcellularLocation>
        <location evidence="1">Cell inner membrane</location>
        <topology evidence="1">Single-pass membrane protein</topology>
    </subcellularLocation>
</comment>
<comment type="similarity">
    <text evidence="1">Belongs to the TatA/E family.</text>
</comment>
<gene>
    <name evidence="1" type="primary">tatA</name>
    <name type="ordered locus">PLES_54581</name>
</gene>
<proteinExistence type="inferred from homology"/>
<accession>B7V3G1</accession>
<feature type="chain" id="PRO_1000197895" description="Sec-independent protein translocase protein TatA">
    <location>
        <begin position="1"/>
        <end position="82"/>
    </location>
</feature>
<feature type="transmembrane region" description="Helical" evidence="1">
    <location>
        <begin position="1"/>
        <end position="21"/>
    </location>
</feature>
<feature type="region of interest" description="Disordered" evidence="2">
    <location>
        <begin position="43"/>
        <end position="82"/>
    </location>
</feature>
<dbReference type="EMBL" id="FM209186">
    <property type="protein sequence ID" value="CAW30212.1"/>
    <property type="molecule type" value="Genomic_DNA"/>
</dbReference>
<dbReference type="RefSeq" id="WP_003095893.1">
    <property type="nucleotide sequence ID" value="NC_011770.1"/>
</dbReference>
<dbReference type="SMR" id="B7V3G1"/>
<dbReference type="KEGG" id="pag:PLES_54581"/>
<dbReference type="HOGENOM" id="CLU_086034_5_1_6"/>
<dbReference type="GO" id="GO:0033281">
    <property type="term" value="C:TAT protein transport complex"/>
    <property type="evidence" value="ECO:0007669"/>
    <property type="project" value="UniProtKB-UniRule"/>
</dbReference>
<dbReference type="GO" id="GO:0008320">
    <property type="term" value="F:protein transmembrane transporter activity"/>
    <property type="evidence" value="ECO:0007669"/>
    <property type="project" value="UniProtKB-UniRule"/>
</dbReference>
<dbReference type="GO" id="GO:0043953">
    <property type="term" value="P:protein transport by the Tat complex"/>
    <property type="evidence" value="ECO:0007669"/>
    <property type="project" value="UniProtKB-UniRule"/>
</dbReference>
<dbReference type="Gene3D" id="1.20.5.3310">
    <property type="match status" value="1"/>
</dbReference>
<dbReference type="HAMAP" id="MF_00236">
    <property type="entry name" value="TatA_E"/>
    <property type="match status" value="1"/>
</dbReference>
<dbReference type="InterPro" id="IPR003369">
    <property type="entry name" value="TatA/B/E"/>
</dbReference>
<dbReference type="InterPro" id="IPR006312">
    <property type="entry name" value="TatA/E"/>
</dbReference>
<dbReference type="NCBIfam" id="NF001681">
    <property type="entry name" value="PRK00442.1"/>
    <property type="match status" value="1"/>
</dbReference>
<dbReference type="NCBIfam" id="TIGR01411">
    <property type="entry name" value="tatAE"/>
    <property type="match status" value="1"/>
</dbReference>
<dbReference type="PANTHER" id="PTHR42982">
    <property type="entry name" value="SEC-INDEPENDENT PROTEIN TRANSLOCASE PROTEIN TATA"/>
    <property type="match status" value="1"/>
</dbReference>
<dbReference type="PANTHER" id="PTHR42982:SF1">
    <property type="entry name" value="SEC-INDEPENDENT PROTEIN TRANSLOCASE PROTEIN TATA"/>
    <property type="match status" value="1"/>
</dbReference>
<dbReference type="Pfam" id="PF02416">
    <property type="entry name" value="TatA_B_E"/>
    <property type="match status" value="1"/>
</dbReference>
<organism>
    <name type="scientific">Pseudomonas aeruginosa (strain LESB58)</name>
    <dbReference type="NCBI Taxonomy" id="557722"/>
    <lineage>
        <taxon>Bacteria</taxon>
        <taxon>Pseudomonadati</taxon>
        <taxon>Pseudomonadota</taxon>
        <taxon>Gammaproteobacteria</taxon>
        <taxon>Pseudomonadales</taxon>
        <taxon>Pseudomonadaceae</taxon>
        <taxon>Pseudomonas</taxon>
    </lineage>
</organism>
<evidence type="ECO:0000255" key="1">
    <source>
        <dbReference type="HAMAP-Rule" id="MF_00236"/>
    </source>
</evidence>
<evidence type="ECO:0000256" key="2">
    <source>
        <dbReference type="SAM" id="MobiDB-lite"/>
    </source>
</evidence>
<sequence>MGIFDWKHWIVILIVVVLVFGTKRLKNLGSDVGEAIKGFRKAVNTEEDDKKDQPAAQPAQPLNQPHTIDAQAQKVEEPARKD</sequence>
<name>TATA_PSEA8</name>
<keyword id="KW-0997">Cell inner membrane</keyword>
<keyword id="KW-1003">Cell membrane</keyword>
<keyword id="KW-0472">Membrane</keyword>
<keyword id="KW-0653">Protein transport</keyword>
<keyword id="KW-0811">Translocation</keyword>
<keyword id="KW-0812">Transmembrane</keyword>
<keyword id="KW-1133">Transmembrane helix</keyword>
<keyword id="KW-0813">Transport</keyword>